<keyword id="KW-0088">Bile acid catabolism</keyword>
<keyword id="KW-0963">Cytoplasm</keyword>
<keyword id="KW-0442">Lipid degradation</keyword>
<keyword id="KW-0443">Lipid metabolism</keyword>
<keyword id="KW-0521">NADP</keyword>
<keyword id="KW-0560">Oxidoreductase</keyword>
<keyword id="KW-1185">Reference proteome</keyword>
<keyword id="KW-0753">Steroid metabolism</keyword>
<comment type="function">
    <text evidence="1">Catalyzes the stereospecific NADPH-dependent reduction of the C4-C5 double bond of bile acid intermediates and steroid hormones carrying a delta(4)-3-one structure to yield an A/B cis-ring junction. This cis-configuration is crucial for bile acid biosynthesis and plays important roles in steroid metabolism. Capable of reducing a broad range of delta-(4)-3-ketosteroids from C18 (such as, 17beta-hydroxyestr-4-en-3-one) to C27 (such as, 7alpha-hydroxycholest-4-en-3-one).</text>
</comment>
<comment type="catalytic activity">
    <reaction evidence="1">
        <text>5beta-cholestan-3-one + NADP(+) = cholest-4-en-3-one + NADPH + H(+)</text>
        <dbReference type="Rhea" id="RHEA:11524"/>
        <dbReference type="ChEBI" id="CHEBI:15378"/>
        <dbReference type="ChEBI" id="CHEBI:16074"/>
        <dbReference type="ChEBI" id="CHEBI:16175"/>
        <dbReference type="ChEBI" id="CHEBI:57783"/>
        <dbReference type="ChEBI" id="CHEBI:58349"/>
        <dbReference type="EC" id="1.3.1.3"/>
    </reaction>
    <physiologicalReaction direction="right-to-left" evidence="1">
        <dbReference type="Rhea" id="RHEA:11526"/>
    </physiologicalReaction>
</comment>
<comment type="catalytic activity">
    <reaction evidence="1">
        <text>4,5beta-dihydrocortisone + NADP(+) = cortisone + NADPH + H(+)</text>
        <dbReference type="Rhea" id="RHEA:14037"/>
        <dbReference type="ChEBI" id="CHEBI:15378"/>
        <dbReference type="ChEBI" id="CHEBI:16962"/>
        <dbReference type="ChEBI" id="CHEBI:18093"/>
        <dbReference type="ChEBI" id="CHEBI:57783"/>
        <dbReference type="ChEBI" id="CHEBI:58349"/>
        <dbReference type="EC" id="1.3.1.3"/>
    </reaction>
    <physiologicalReaction direction="right-to-left" evidence="1">
        <dbReference type="Rhea" id="RHEA:14039"/>
    </physiologicalReaction>
</comment>
<comment type="catalytic activity">
    <reaction evidence="1">
        <text>cortisol + NADPH + H(+) = 5beta-dihydrocortisol + NADP(+)</text>
        <dbReference type="Rhea" id="RHEA:46644"/>
        <dbReference type="ChEBI" id="CHEBI:732"/>
        <dbReference type="ChEBI" id="CHEBI:15378"/>
        <dbReference type="ChEBI" id="CHEBI:17650"/>
        <dbReference type="ChEBI" id="CHEBI:57783"/>
        <dbReference type="ChEBI" id="CHEBI:58349"/>
    </reaction>
    <physiologicalReaction direction="left-to-right" evidence="1">
        <dbReference type="Rhea" id="RHEA:46645"/>
    </physiologicalReaction>
</comment>
<comment type="catalytic activity">
    <reaction evidence="1">
        <text>corticosterone + NADPH + H(+) = 5beta-dihydrocorticosterone + NADP(+)</text>
        <dbReference type="Rhea" id="RHEA:46664"/>
        <dbReference type="ChEBI" id="CHEBI:15378"/>
        <dbReference type="ChEBI" id="CHEBI:16827"/>
        <dbReference type="ChEBI" id="CHEBI:57783"/>
        <dbReference type="ChEBI" id="CHEBI:58349"/>
        <dbReference type="ChEBI" id="CHEBI:86381"/>
    </reaction>
    <physiologicalReaction direction="left-to-right" evidence="1">
        <dbReference type="Rhea" id="RHEA:46665"/>
    </physiologicalReaction>
</comment>
<comment type="catalytic activity">
    <reaction evidence="1">
        <text>7alpha,12alpha-dihydroxycholest-4-en-3-one + NADPH + H(+) = 7alpha,12alpha-dihydroxy-5beta-cholestan-3-one + NADP(+)</text>
        <dbReference type="Rhea" id="RHEA:46632"/>
        <dbReference type="ChEBI" id="CHEBI:2288"/>
        <dbReference type="ChEBI" id="CHEBI:15378"/>
        <dbReference type="ChEBI" id="CHEBI:28477"/>
        <dbReference type="ChEBI" id="CHEBI:57783"/>
        <dbReference type="ChEBI" id="CHEBI:58349"/>
    </reaction>
    <physiologicalReaction direction="left-to-right" evidence="1">
        <dbReference type="Rhea" id="RHEA:46633"/>
    </physiologicalReaction>
</comment>
<comment type="catalytic activity">
    <reaction evidence="1">
        <text>7alpha-hydroxycholest-4-en-3-one + NADPH + H(+) = 7alpha-hydroxy-5beta-cholestan-3-one + NADP(+)</text>
        <dbReference type="Rhea" id="RHEA:46640"/>
        <dbReference type="ChEBI" id="CHEBI:2290"/>
        <dbReference type="ChEBI" id="CHEBI:15378"/>
        <dbReference type="ChEBI" id="CHEBI:17899"/>
        <dbReference type="ChEBI" id="CHEBI:57783"/>
        <dbReference type="ChEBI" id="CHEBI:58349"/>
    </reaction>
    <physiologicalReaction direction="left-to-right" evidence="1">
        <dbReference type="Rhea" id="RHEA:46641"/>
    </physiologicalReaction>
</comment>
<comment type="catalytic activity">
    <reaction evidence="1">
        <text>epitestosterone + NADPH + H(+) = 5beta-dihydroepitestosterone + NADP(+)</text>
        <dbReference type="Rhea" id="RHEA:46652"/>
        <dbReference type="ChEBI" id="CHEBI:15378"/>
        <dbReference type="ChEBI" id="CHEBI:42534"/>
        <dbReference type="ChEBI" id="CHEBI:57783"/>
        <dbReference type="ChEBI" id="CHEBI:58349"/>
        <dbReference type="ChEBI" id="CHEBI:86377"/>
    </reaction>
    <physiologicalReaction direction="left-to-right" evidence="1">
        <dbReference type="Rhea" id="RHEA:46653"/>
    </physiologicalReaction>
</comment>
<comment type="catalytic activity">
    <reaction evidence="1">
        <text>androst-4-ene-3,17-dione + NADPH + H(+) = 5beta-androstane-3,17-dione + NADP(+)</text>
        <dbReference type="Rhea" id="RHEA:46656"/>
        <dbReference type="ChEBI" id="CHEBI:15378"/>
        <dbReference type="ChEBI" id="CHEBI:16422"/>
        <dbReference type="ChEBI" id="CHEBI:16985"/>
        <dbReference type="ChEBI" id="CHEBI:57783"/>
        <dbReference type="ChEBI" id="CHEBI:58349"/>
    </reaction>
    <physiologicalReaction direction="left-to-right" evidence="1">
        <dbReference type="Rhea" id="RHEA:46657"/>
    </physiologicalReaction>
</comment>
<comment type="catalytic activity">
    <reaction evidence="1">
        <text>progesterone + NADPH + H(+) = 5beta-pregnan-3,20-dione + NADP(+)</text>
        <dbReference type="Rhea" id="RHEA:46660"/>
        <dbReference type="ChEBI" id="CHEBI:15378"/>
        <dbReference type="ChEBI" id="CHEBI:17026"/>
        <dbReference type="ChEBI" id="CHEBI:30154"/>
        <dbReference type="ChEBI" id="CHEBI:57783"/>
        <dbReference type="ChEBI" id="CHEBI:58349"/>
    </reaction>
    <physiologicalReaction direction="left-to-right" evidence="1">
        <dbReference type="Rhea" id="RHEA:46661"/>
    </physiologicalReaction>
</comment>
<comment type="catalytic activity">
    <reaction evidence="1">
        <text>21-hydroxyprogesterone + NADPH + H(+) = 5beta-dihydrodeoxycorticosterone + NADP(+)</text>
        <dbReference type="Rhea" id="RHEA:46668"/>
        <dbReference type="ChEBI" id="CHEBI:15378"/>
        <dbReference type="ChEBI" id="CHEBI:16973"/>
        <dbReference type="ChEBI" id="CHEBI:57783"/>
        <dbReference type="ChEBI" id="CHEBI:58349"/>
        <dbReference type="ChEBI" id="CHEBI:86384"/>
    </reaction>
    <physiologicalReaction direction="left-to-right" evidence="1">
        <dbReference type="Rhea" id="RHEA:46669"/>
    </physiologicalReaction>
</comment>
<comment type="catalytic activity">
    <reaction evidence="1">
        <text>aldosterone + NADPH + H(+) = 5beta-dihydroaldosterone + NADP(+)</text>
        <dbReference type="Rhea" id="RHEA:46672"/>
        <dbReference type="ChEBI" id="CHEBI:15378"/>
        <dbReference type="ChEBI" id="CHEBI:27584"/>
        <dbReference type="ChEBI" id="CHEBI:57783"/>
        <dbReference type="ChEBI" id="CHEBI:58349"/>
        <dbReference type="ChEBI" id="CHEBI:86389"/>
    </reaction>
    <physiologicalReaction direction="left-to-right" evidence="1">
        <dbReference type="Rhea" id="RHEA:46673"/>
    </physiologicalReaction>
</comment>
<comment type="catalytic activity">
    <reaction evidence="1">
        <text>17beta-hydroxyandrosta-1,4-dien-3-one + NADPH + H(+) = 17beta-hydroxy-5beta-androst-1-en-3-one + NADP(+)</text>
        <dbReference type="Rhea" id="RHEA:47076"/>
        <dbReference type="ChEBI" id="CHEBI:15378"/>
        <dbReference type="ChEBI" id="CHEBI:34584"/>
        <dbReference type="ChEBI" id="CHEBI:57783"/>
        <dbReference type="ChEBI" id="CHEBI:58349"/>
        <dbReference type="ChEBI" id="CHEBI:87331"/>
    </reaction>
    <physiologicalReaction direction="left-to-right" evidence="1">
        <dbReference type="Rhea" id="RHEA:47077"/>
    </physiologicalReaction>
</comment>
<comment type="catalytic activity">
    <reaction evidence="1">
        <text>17beta-hydroxyestr-4-en-3-one + NADPH + H(+) = 17beta-hydroxy-5beta-estran-3-one + NADP(+)</text>
        <dbReference type="Rhea" id="RHEA:47080"/>
        <dbReference type="ChEBI" id="CHEBI:7466"/>
        <dbReference type="ChEBI" id="CHEBI:15378"/>
        <dbReference type="ChEBI" id="CHEBI:57783"/>
        <dbReference type="ChEBI" id="CHEBI:58349"/>
        <dbReference type="ChEBI" id="CHEBI:87333"/>
    </reaction>
    <physiologicalReaction direction="left-to-right" evidence="1">
        <dbReference type="Rhea" id="RHEA:47081"/>
    </physiologicalReaction>
</comment>
<comment type="catalytic activity">
    <reaction evidence="1">
        <text>5beta-dihydrotestosterone + NADP(+) = testosterone + NADPH + H(+)</text>
        <dbReference type="Rhea" id="RHEA:46636"/>
        <dbReference type="ChEBI" id="CHEBI:2150"/>
        <dbReference type="ChEBI" id="CHEBI:15378"/>
        <dbReference type="ChEBI" id="CHEBI:17347"/>
        <dbReference type="ChEBI" id="CHEBI:57783"/>
        <dbReference type="ChEBI" id="CHEBI:58349"/>
        <dbReference type="EC" id="1.3.1.3"/>
    </reaction>
    <physiologicalReaction direction="left-to-right" evidence="1">
        <dbReference type="Rhea" id="RHEA:46637"/>
    </physiologicalReaction>
</comment>
<comment type="catalytic activity">
    <reaction evidence="1">
        <text>androst-4-ene-3,11,17-trione + NADPH + H(+) = 17beta-hydroxyandrost-4-ene-3,11-dione + NADP(+)</text>
        <dbReference type="Rhea" id="RHEA:53484"/>
        <dbReference type="ChEBI" id="CHEBI:2495"/>
        <dbReference type="ChEBI" id="CHEBI:15378"/>
        <dbReference type="ChEBI" id="CHEBI:34133"/>
        <dbReference type="ChEBI" id="CHEBI:57783"/>
        <dbReference type="ChEBI" id="CHEBI:58349"/>
    </reaction>
    <physiologicalReaction direction="left-to-right" evidence="1">
        <dbReference type="Rhea" id="RHEA:53485"/>
    </physiologicalReaction>
</comment>
<comment type="activity regulation">
    <text evidence="1">Subject to inhibition by high substrate concentrations. Inhibited by testosterone concentrations above 10 uM. Inhibited by the primary and secondary bile acids chenodeoxycholic acid and ursodeoxycholic acid.</text>
</comment>
<comment type="subcellular location">
    <subcellularLocation>
        <location evidence="1">Cytoplasm</location>
    </subcellularLocation>
</comment>
<comment type="similarity">
    <text evidence="2">Belongs to the aldo/keto reductase family.</text>
</comment>
<proteinExistence type="evidence at transcript level"/>
<gene>
    <name type="primary">AKR1D1</name>
</gene>
<sequence length="326" mass="37491">MDLSATNHRIPLGDGNSIPIIGLGTYSEPKTTPKGSCATSVKIAIDTGYRHIDGAYIYQNEHEVGETFREKIAEGKVRREDIFYCGKLWATNHDPVMVRPTLERTLKVLKLDYIDLYIIEIPMAFKPGDVVYPRDENGKWLYHKTNLCATWEALEACKDAGLVKSLGVSNFNRQQLELLLNKPGLKHKPVCNQVECHPYFTQPKLLKFCQQHDIIIVAYSPLGTCRNPMWVNTSLPPLLKDTLLNSLGKKYKKTAAQIVLRFNVQRGVVVIPKSFNPERIKENFQIFDFSLTEEEMKDIEALNKNVRYVELLMWRDHPEYPFNDEY</sequence>
<organism>
    <name type="scientific">Oryctolagus cuniculus</name>
    <name type="common">Rabbit</name>
    <dbReference type="NCBI Taxonomy" id="9986"/>
    <lineage>
        <taxon>Eukaryota</taxon>
        <taxon>Metazoa</taxon>
        <taxon>Chordata</taxon>
        <taxon>Craniata</taxon>
        <taxon>Vertebrata</taxon>
        <taxon>Euteleostomi</taxon>
        <taxon>Mammalia</taxon>
        <taxon>Eutheria</taxon>
        <taxon>Euarchontoglires</taxon>
        <taxon>Glires</taxon>
        <taxon>Lagomorpha</taxon>
        <taxon>Leporidae</taxon>
        <taxon>Oryctolagus</taxon>
    </lineage>
</organism>
<dbReference type="EC" id="1.3.1.3" evidence="1"/>
<dbReference type="EMBL" id="AB023951">
    <property type="protein sequence ID" value="BAA82867.1"/>
    <property type="molecule type" value="mRNA"/>
</dbReference>
<dbReference type="SMR" id="Q9TV64"/>
<dbReference type="FunCoup" id="Q9TV64">
    <property type="interactions" value="173"/>
</dbReference>
<dbReference type="STRING" id="9986.ENSOCUP00000014594"/>
<dbReference type="PaxDb" id="9986-ENSOCUP00000014594"/>
<dbReference type="KEGG" id="ocu:100008612"/>
<dbReference type="eggNOG" id="KOG1577">
    <property type="taxonomic scope" value="Eukaryota"/>
</dbReference>
<dbReference type="InParanoid" id="Q9TV64"/>
<dbReference type="OrthoDB" id="416253at2759"/>
<dbReference type="Proteomes" id="UP000001811">
    <property type="component" value="Unplaced"/>
</dbReference>
<dbReference type="GO" id="GO:0005737">
    <property type="term" value="C:cytoplasm"/>
    <property type="evidence" value="ECO:0007669"/>
    <property type="project" value="UniProtKB-SubCell"/>
</dbReference>
<dbReference type="GO" id="GO:0047787">
    <property type="term" value="F:Delta4-3-oxosteroid 5beta-reductase activity"/>
    <property type="evidence" value="ECO:0007669"/>
    <property type="project" value="UniProtKB-EC"/>
</dbReference>
<dbReference type="GO" id="GO:0006699">
    <property type="term" value="P:bile acid biosynthetic process"/>
    <property type="evidence" value="ECO:0007669"/>
    <property type="project" value="InterPro"/>
</dbReference>
<dbReference type="GO" id="GO:0030573">
    <property type="term" value="P:bile acid catabolic process"/>
    <property type="evidence" value="ECO:0007669"/>
    <property type="project" value="UniProtKB-KW"/>
</dbReference>
<dbReference type="GO" id="GO:0016042">
    <property type="term" value="P:lipid catabolic process"/>
    <property type="evidence" value="ECO:0007669"/>
    <property type="project" value="UniProtKB-KW"/>
</dbReference>
<dbReference type="CDD" id="cd19109">
    <property type="entry name" value="AKR_AKR1D1-3"/>
    <property type="match status" value="1"/>
</dbReference>
<dbReference type="FunFam" id="3.20.20.100:FF:000003">
    <property type="entry name" value="Aldo-keto reductase family 1 member C3"/>
    <property type="match status" value="1"/>
</dbReference>
<dbReference type="Gene3D" id="3.20.20.100">
    <property type="entry name" value="NADP-dependent oxidoreductase domain"/>
    <property type="match status" value="1"/>
</dbReference>
<dbReference type="InterPro" id="IPR020471">
    <property type="entry name" value="AKR"/>
</dbReference>
<dbReference type="InterPro" id="IPR044483">
    <property type="entry name" value="AKR1D1"/>
</dbReference>
<dbReference type="InterPro" id="IPR018170">
    <property type="entry name" value="Aldo/ket_reductase_CS"/>
</dbReference>
<dbReference type="InterPro" id="IPR023210">
    <property type="entry name" value="NADP_OxRdtase_dom"/>
</dbReference>
<dbReference type="InterPro" id="IPR036812">
    <property type="entry name" value="NADP_OxRdtase_dom_sf"/>
</dbReference>
<dbReference type="PANTHER" id="PTHR11732">
    <property type="entry name" value="ALDO/KETO REDUCTASE"/>
    <property type="match status" value="1"/>
</dbReference>
<dbReference type="Pfam" id="PF00248">
    <property type="entry name" value="Aldo_ket_red"/>
    <property type="match status" value="1"/>
</dbReference>
<dbReference type="PIRSF" id="PIRSF000097">
    <property type="entry name" value="AKR"/>
    <property type="match status" value="1"/>
</dbReference>
<dbReference type="PRINTS" id="PR00069">
    <property type="entry name" value="ALDKETRDTASE"/>
</dbReference>
<dbReference type="SUPFAM" id="SSF51430">
    <property type="entry name" value="NAD(P)-linked oxidoreductase"/>
    <property type="match status" value="1"/>
</dbReference>
<dbReference type="PROSITE" id="PS00798">
    <property type="entry name" value="ALDOKETO_REDUCTASE_1"/>
    <property type="match status" value="1"/>
</dbReference>
<dbReference type="PROSITE" id="PS00062">
    <property type="entry name" value="ALDOKETO_REDUCTASE_2"/>
    <property type="match status" value="1"/>
</dbReference>
<dbReference type="PROSITE" id="PS00063">
    <property type="entry name" value="ALDOKETO_REDUCTASE_3"/>
    <property type="match status" value="1"/>
</dbReference>
<reference key="1">
    <citation type="submission" date="1999-02" db="EMBL/GenBank/DDBJ databases">
        <title>Delta4-3-oxosteroid 5beta-reductase.</title>
        <authorList>
            <person name="Yamada M."/>
            <person name="Setoguchi Y."/>
            <person name="Setoguchi T."/>
        </authorList>
    </citation>
    <scope>NUCLEOTIDE SEQUENCE [MRNA]</scope>
    <source>
        <strain>New Zealand white</strain>
        <tissue>Liver</tissue>
    </source>
</reference>
<evidence type="ECO:0000250" key="1">
    <source>
        <dbReference type="UniProtKB" id="P51857"/>
    </source>
</evidence>
<evidence type="ECO:0000305" key="2"/>
<accession>Q9TV64</accession>
<protein>
    <recommendedName>
        <fullName>Aldo-keto reductase family 1 member D1</fullName>
        <ecNumber evidence="1">1.3.1.3</ecNumber>
    </recommendedName>
    <alternativeName>
        <fullName>3-oxo-5-beta-steroid 4-dehydrogenase</fullName>
    </alternativeName>
    <alternativeName>
        <fullName>Delta(4)-3-ketosteroid 5-beta-reductase</fullName>
    </alternativeName>
    <alternativeName>
        <fullName>Delta(4)-3-oxosteroid 5-beta-reductase</fullName>
    </alternativeName>
</protein>
<name>AK1D1_RABIT</name>
<feature type="chain" id="PRO_0000124671" description="Aldo-keto reductase family 1 member D1">
    <location>
        <begin position="1"/>
        <end position="326"/>
    </location>
</feature>
<feature type="active site" description="Proton donor" evidence="1">
    <location>
        <position position="58"/>
    </location>
</feature>
<feature type="binding site" evidence="1">
    <location>
        <begin position="22"/>
        <end position="26"/>
    </location>
    <ligand>
        <name>NADP(+)</name>
        <dbReference type="ChEBI" id="CHEBI:58349"/>
    </ligand>
</feature>
<feature type="binding site" evidence="1">
    <location>
        <position position="26"/>
    </location>
    <ligand>
        <name>substrate</name>
    </ligand>
</feature>
<feature type="binding site" evidence="1">
    <location>
        <position position="53"/>
    </location>
    <ligand>
        <name>NADP(+)</name>
        <dbReference type="ChEBI" id="CHEBI:58349"/>
    </ligand>
</feature>
<feature type="binding site" evidence="1">
    <location>
        <position position="58"/>
    </location>
    <ligand>
        <name>substrate</name>
    </ligand>
</feature>
<feature type="binding site" evidence="1">
    <location>
        <position position="89"/>
    </location>
    <ligand>
        <name>substrate</name>
    </ligand>
</feature>
<feature type="binding site" evidence="1">
    <location>
        <position position="120"/>
    </location>
    <ligand>
        <name>substrate</name>
    </ligand>
</feature>
<feature type="binding site" evidence="1">
    <location>
        <position position="132"/>
    </location>
    <ligand>
        <name>substrate</name>
    </ligand>
</feature>
<feature type="binding site" evidence="1">
    <location>
        <begin position="169"/>
        <end position="170"/>
    </location>
    <ligand>
        <name>NADP(+)</name>
        <dbReference type="ChEBI" id="CHEBI:58349"/>
    </ligand>
</feature>
<feature type="binding site" evidence="1">
    <location>
        <position position="193"/>
    </location>
    <ligand>
        <name>NADP(+)</name>
        <dbReference type="ChEBI" id="CHEBI:58349"/>
    </ligand>
</feature>
<feature type="binding site" evidence="1">
    <location>
        <begin position="219"/>
        <end position="224"/>
    </location>
    <ligand>
        <name>NADP(+)</name>
        <dbReference type="ChEBI" id="CHEBI:58349"/>
    </ligand>
</feature>
<feature type="binding site" evidence="1">
    <location>
        <position position="230"/>
    </location>
    <ligand>
        <name>substrate</name>
    </ligand>
</feature>
<feature type="binding site" evidence="1">
    <location>
        <begin position="273"/>
        <end position="283"/>
    </location>
    <ligand>
        <name>NADP(+)</name>
        <dbReference type="ChEBI" id="CHEBI:58349"/>
    </ligand>
</feature>